<reference key="1">
    <citation type="journal article" date="2004" name="Nat. Biotechnol.">
        <title>Complete genome sequence of the metabolically versatile photosynthetic bacterium Rhodopseudomonas palustris.</title>
        <authorList>
            <person name="Larimer F.W."/>
            <person name="Chain P."/>
            <person name="Hauser L."/>
            <person name="Lamerdin J.E."/>
            <person name="Malfatti S."/>
            <person name="Do L."/>
            <person name="Land M.L."/>
            <person name="Pelletier D.A."/>
            <person name="Beatty J.T."/>
            <person name="Lang A.S."/>
            <person name="Tabita F.R."/>
            <person name="Gibson J.L."/>
            <person name="Hanson T.E."/>
            <person name="Bobst C."/>
            <person name="Torres y Torres J.L."/>
            <person name="Peres C."/>
            <person name="Harrison F.H."/>
            <person name="Gibson J."/>
            <person name="Harwood C.S."/>
        </authorList>
    </citation>
    <scope>NUCLEOTIDE SEQUENCE [LARGE SCALE GENOMIC DNA]</scope>
    <source>
        <strain>ATCC BAA-98 / CGA009</strain>
    </source>
</reference>
<gene>
    <name evidence="1" type="primary">accD</name>
    <name type="ordered locus">RPA0071</name>
</gene>
<sequence>MNWLTNVVRPKIRNILRRETPENLWIKCPDTGQLVFYKDVEQNQFVIPGSNYHMRMGAVARLRAIFDNETWYDVALPEVVADPLKFRDERKYADRIKDARTKTGAHDAVRVGFGKLETSPVVVAVQDFDFMGGSLGMAAGEAIIRGMELAVEKHAPFIMFAASGGARMQEGILSLMQMPRTTVAVQMLREAKLPYIVVLTNPTTGGVTASYAMLGDIHIAEPGALIGFAGARVIEQTIREKLPDGFQRAEYLKEHGMVDMVVHRHDLRPTLARLCRLLTKSPALTVTTAVEAPAEAAAKAEPEATTTEQPGAPAPTEPPAQPAAPQA</sequence>
<feature type="chain" id="PRO_0000389833" description="Acetyl-coenzyme A carboxylase carboxyl transferase subunit beta">
    <location>
        <begin position="1"/>
        <end position="327"/>
    </location>
</feature>
<feature type="domain" description="CoA carboxyltransferase N-terminal" evidence="2">
    <location>
        <begin position="24"/>
        <end position="293"/>
    </location>
</feature>
<feature type="region of interest" description="Disordered" evidence="3">
    <location>
        <begin position="293"/>
        <end position="327"/>
    </location>
</feature>
<feature type="compositionally biased region" description="Low complexity" evidence="3">
    <location>
        <begin position="293"/>
        <end position="311"/>
    </location>
</feature>
<feature type="compositionally biased region" description="Pro residues" evidence="3">
    <location>
        <begin position="312"/>
        <end position="327"/>
    </location>
</feature>
<proteinExistence type="inferred from homology"/>
<organism>
    <name type="scientific">Rhodopseudomonas palustris (strain ATCC BAA-98 / CGA009)</name>
    <dbReference type="NCBI Taxonomy" id="258594"/>
    <lineage>
        <taxon>Bacteria</taxon>
        <taxon>Pseudomonadati</taxon>
        <taxon>Pseudomonadota</taxon>
        <taxon>Alphaproteobacteria</taxon>
        <taxon>Hyphomicrobiales</taxon>
        <taxon>Nitrobacteraceae</taxon>
        <taxon>Rhodopseudomonas</taxon>
    </lineage>
</organism>
<comment type="function">
    <text evidence="1">Component of the acetyl coenzyme A carboxylase (ACC) complex. Biotin carboxylase (BC) catalyzes the carboxylation of biotin on its carrier protein (BCCP) and then the CO(2) group is transferred by the transcarboxylase to acetyl-CoA to form malonyl-CoA.</text>
</comment>
<comment type="catalytic activity">
    <reaction evidence="1">
        <text>N(6)-carboxybiotinyl-L-lysyl-[protein] + acetyl-CoA = N(6)-biotinyl-L-lysyl-[protein] + malonyl-CoA</text>
        <dbReference type="Rhea" id="RHEA:54728"/>
        <dbReference type="Rhea" id="RHEA-COMP:10505"/>
        <dbReference type="Rhea" id="RHEA-COMP:10506"/>
        <dbReference type="ChEBI" id="CHEBI:57288"/>
        <dbReference type="ChEBI" id="CHEBI:57384"/>
        <dbReference type="ChEBI" id="CHEBI:83144"/>
        <dbReference type="ChEBI" id="CHEBI:83145"/>
        <dbReference type="EC" id="2.1.3.15"/>
    </reaction>
</comment>
<comment type="pathway">
    <text evidence="1">Lipid metabolism; malonyl-CoA biosynthesis; malonyl-CoA from acetyl-CoA: step 1/1.</text>
</comment>
<comment type="subunit">
    <text evidence="1">Acetyl-CoA carboxylase is a heterohexamer composed of biotin carboxyl carrier protein (AccB), biotin carboxylase (AccC) and two subunits each of ACCase subunit alpha (AccA) and ACCase subunit beta (AccD).</text>
</comment>
<comment type="subcellular location">
    <subcellularLocation>
        <location evidence="1">Cytoplasm</location>
    </subcellularLocation>
</comment>
<comment type="similarity">
    <text evidence="1">Belongs to the AccD/PCCB family.</text>
</comment>
<dbReference type="EC" id="2.1.3.15" evidence="1"/>
<dbReference type="EMBL" id="BX572593">
    <property type="protein sequence ID" value="CAE25515.1"/>
    <property type="molecule type" value="Genomic_DNA"/>
</dbReference>
<dbReference type="RefSeq" id="WP_011155642.1">
    <property type="nucleotide sequence ID" value="NZ_CP116810.1"/>
</dbReference>
<dbReference type="SMR" id="Q6NDN4"/>
<dbReference type="STRING" id="258594.RPA0071"/>
<dbReference type="GeneID" id="66891072"/>
<dbReference type="eggNOG" id="COG0777">
    <property type="taxonomic scope" value="Bacteria"/>
</dbReference>
<dbReference type="HOGENOM" id="CLU_015486_1_0_5"/>
<dbReference type="PhylomeDB" id="Q6NDN4"/>
<dbReference type="UniPathway" id="UPA00655">
    <property type="reaction ID" value="UER00711"/>
</dbReference>
<dbReference type="GO" id="GO:0009329">
    <property type="term" value="C:acetate CoA-transferase complex"/>
    <property type="evidence" value="ECO:0007669"/>
    <property type="project" value="TreeGrafter"/>
</dbReference>
<dbReference type="GO" id="GO:0003989">
    <property type="term" value="F:acetyl-CoA carboxylase activity"/>
    <property type="evidence" value="ECO:0007669"/>
    <property type="project" value="InterPro"/>
</dbReference>
<dbReference type="GO" id="GO:0005524">
    <property type="term" value="F:ATP binding"/>
    <property type="evidence" value="ECO:0007669"/>
    <property type="project" value="UniProtKB-KW"/>
</dbReference>
<dbReference type="GO" id="GO:0016743">
    <property type="term" value="F:carboxyl- or carbamoyltransferase activity"/>
    <property type="evidence" value="ECO:0007669"/>
    <property type="project" value="UniProtKB-UniRule"/>
</dbReference>
<dbReference type="GO" id="GO:0006633">
    <property type="term" value="P:fatty acid biosynthetic process"/>
    <property type="evidence" value="ECO:0007669"/>
    <property type="project" value="UniProtKB-KW"/>
</dbReference>
<dbReference type="GO" id="GO:2001295">
    <property type="term" value="P:malonyl-CoA biosynthetic process"/>
    <property type="evidence" value="ECO:0007669"/>
    <property type="project" value="UniProtKB-UniRule"/>
</dbReference>
<dbReference type="Gene3D" id="3.90.226.10">
    <property type="entry name" value="2-enoyl-CoA Hydratase, Chain A, domain 1"/>
    <property type="match status" value="1"/>
</dbReference>
<dbReference type="HAMAP" id="MF_01395">
    <property type="entry name" value="AcetylCoA_CT_beta"/>
    <property type="match status" value="1"/>
</dbReference>
<dbReference type="InterPro" id="IPR034733">
    <property type="entry name" value="AcCoA_carboxyl_beta"/>
</dbReference>
<dbReference type="InterPro" id="IPR000438">
    <property type="entry name" value="Acetyl_CoA_COase_Trfase_b_su"/>
</dbReference>
<dbReference type="InterPro" id="IPR029045">
    <property type="entry name" value="ClpP/crotonase-like_dom_sf"/>
</dbReference>
<dbReference type="InterPro" id="IPR011762">
    <property type="entry name" value="COA_CT_N"/>
</dbReference>
<dbReference type="NCBIfam" id="TIGR00515">
    <property type="entry name" value="accD"/>
    <property type="match status" value="1"/>
</dbReference>
<dbReference type="PANTHER" id="PTHR42995">
    <property type="entry name" value="ACETYL-COENZYME A CARBOXYLASE CARBOXYL TRANSFERASE SUBUNIT BETA, CHLOROPLASTIC"/>
    <property type="match status" value="1"/>
</dbReference>
<dbReference type="PANTHER" id="PTHR42995:SF5">
    <property type="entry name" value="ACETYL-COENZYME A CARBOXYLASE CARBOXYL TRANSFERASE SUBUNIT BETA, CHLOROPLASTIC"/>
    <property type="match status" value="1"/>
</dbReference>
<dbReference type="Pfam" id="PF01039">
    <property type="entry name" value="Carboxyl_trans"/>
    <property type="match status" value="1"/>
</dbReference>
<dbReference type="PRINTS" id="PR01070">
    <property type="entry name" value="ACCCTRFRASEB"/>
</dbReference>
<dbReference type="SUPFAM" id="SSF52096">
    <property type="entry name" value="ClpP/crotonase"/>
    <property type="match status" value="1"/>
</dbReference>
<dbReference type="PROSITE" id="PS50980">
    <property type="entry name" value="COA_CT_NTER"/>
    <property type="match status" value="1"/>
</dbReference>
<protein>
    <recommendedName>
        <fullName evidence="1">Acetyl-coenzyme A carboxylase carboxyl transferase subunit beta</fullName>
        <shortName evidence="1">ACCase subunit beta</shortName>
        <shortName evidence="1">Acetyl-CoA carboxylase carboxyltransferase subunit beta</shortName>
        <ecNumber evidence="1">2.1.3.15</ecNumber>
    </recommendedName>
</protein>
<keyword id="KW-0067">ATP-binding</keyword>
<keyword id="KW-0963">Cytoplasm</keyword>
<keyword id="KW-0275">Fatty acid biosynthesis</keyword>
<keyword id="KW-0276">Fatty acid metabolism</keyword>
<keyword id="KW-0444">Lipid biosynthesis</keyword>
<keyword id="KW-0443">Lipid metabolism</keyword>
<keyword id="KW-0547">Nucleotide-binding</keyword>
<keyword id="KW-0808">Transferase</keyword>
<evidence type="ECO:0000255" key="1">
    <source>
        <dbReference type="HAMAP-Rule" id="MF_01395"/>
    </source>
</evidence>
<evidence type="ECO:0000255" key="2">
    <source>
        <dbReference type="PROSITE-ProRule" id="PRU01136"/>
    </source>
</evidence>
<evidence type="ECO:0000256" key="3">
    <source>
        <dbReference type="SAM" id="MobiDB-lite"/>
    </source>
</evidence>
<accession>Q6NDN4</accession>
<name>ACCD_RHOPA</name>